<name>THEM6_XENLA</name>
<sequence>MMLFLAIALGLIAAIFSLLDVWYFIRGALVVLKARIQPVVKDLLKEHSYSGIVLPHDLDFLFHMNNSRYLREADFARFAHFTRSGLFQAMHSLGSSMVMAGCTIRYRRSLRLWETFEIRTRLLCWDDKAFYVEQRFVALKDDFVSAVLMSRQHVIGNSPDKVVQSMCKRKVESPEYPEEVVHWIKYNDSSSQQLRAESGVSNNSKDE</sequence>
<keyword id="KW-0325">Glycoprotein</keyword>
<keyword id="KW-1185">Reference proteome</keyword>
<keyword id="KW-0964">Secreted</keyword>
<keyword id="KW-0732">Signal</keyword>
<comment type="subcellular location">
    <subcellularLocation>
        <location evidence="2">Secreted</location>
    </subcellularLocation>
</comment>
<comment type="similarity">
    <text evidence="2">Belongs to the THEM6 family.</text>
</comment>
<proteinExistence type="evidence at transcript level"/>
<reference key="1">
    <citation type="submission" date="2004-05" db="EMBL/GenBank/DDBJ databases">
        <authorList>
            <consortium name="NIH - Xenopus Gene Collection (XGC) project"/>
        </authorList>
    </citation>
    <scope>NUCLEOTIDE SEQUENCE [LARGE SCALE MRNA]</scope>
    <source>
        <tissue>Oocyte</tissue>
    </source>
</reference>
<dbReference type="EMBL" id="BC070741">
    <property type="protein sequence ID" value="AAH70741.1"/>
    <property type="molecule type" value="mRNA"/>
</dbReference>
<dbReference type="RefSeq" id="NP_001084794.1">
    <property type="nucleotide sequence ID" value="NM_001091325.1"/>
</dbReference>
<dbReference type="SMR" id="Q6NRK8"/>
<dbReference type="GlyCosmos" id="Q6NRK8">
    <property type="glycosylation" value="1 site, No reported glycans"/>
</dbReference>
<dbReference type="DNASU" id="431834"/>
<dbReference type="GeneID" id="431834"/>
<dbReference type="KEGG" id="xla:431834"/>
<dbReference type="AGR" id="Xenbase:XB-GENE-6251769"/>
<dbReference type="CTD" id="431834"/>
<dbReference type="Xenbase" id="XB-GENE-6251769">
    <property type="gene designation" value="them6.L"/>
</dbReference>
<dbReference type="OrthoDB" id="265761at2759"/>
<dbReference type="Proteomes" id="UP000186698">
    <property type="component" value="Chromosome 6L"/>
</dbReference>
<dbReference type="Bgee" id="431834">
    <property type="expression patterns" value="Expressed in camera-type eye and 19 other cell types or tissues"/>
</dbReference>
<dbReference type="GO" id="GO:0005576">
    <property type="term" value="C:extracellular region"/>
    <property type="evidence" value="ECO:0007669"/>
    <property type="project" value="UniProtKB-SubCell"/>
</dbReference>
<dbReference type="CDD" id="cd00586">
    <property type="entry name" value="4HBT"/>
    <property type="match status" value="1"/>
</dbReference>
<dbReference type="Gene3D" id="3.10.129.10">
    <property type="entry name" value="Hotdog Thioesterase"/>
    <property type="match status" value="1"/>
</dbReference>
<dbReference type="InterPro" id="IPR029069">
    <property type="entry name" value="HotDog_dom_sf"/>
</dbReference>
<dbReference type="InterPro" id="IPR051490">
    <property type="entry name" value="THEM6_lcsJ_thioesterase"/>
</dbReference>
<dbReference type="PANTHER" id="PTHR12475">
    <property type="match status" value="1"/>
</dbReference>
<dbReference type="PANTHER" id="PTHR12475:SF4">
    <property type="entry name" value="PROTEIN THEM6"/>
    <property type="match status" value="1"/>
</dbReference>
<dbReference type="Pfam" id="PF13279">
    <property type="entry name" value="4HBT_2"/>
    <property type="match status" value="1"/>
</dbReference>
<dbReference type="SUPFAM" id="SSF54637">
    <property type="entry name" value="Thioesterase/thiol ester dehydrase-isomerase"/>
    <property type="match status" value="1"/>
</dbReference>
<organism>
    <name type="scientific">Xenopus laevis</name>
    <name type="common">African clawed frog</name>
    <dbReference type="NCBI Taxonomy" id="8355"/>
    <lineage>
        <taxon>Eukaryota</taxon>
        <taxon>Metazoa</taxon>
        <taxon>Chordata</taxon>
        <taxon>Craniata</taxon>
        <taxon>Vertebrata</taxon>
        <taxon>Euteleostomi</taxon>
        <taxon>Amphibia</taxon>
        <taxon>Batrachia</taxon>
        <taxon>Anura</taxon>
        <taxon>Pipoidea</taxon>
        <taxon>Pipidae</taxon>
        <taxon>Xenopodinae</taxon>
        <taxon>Xenopus</taxon>
        <taxon>Xenopus</taxon>
    </lineage>
</organism>
<accession>Q6NRK8</accession>
<protein>
    <recommendedName>
        <fullName>Protein THEM6</fullName>
    </recommendedName>
</protein>
<gene>
    <name type="primary">them6</name>
</gene>
<feature type="signal peptide" evidence="1">
    <location>
        <begin position="1"/>
        <end position="27"/>
    </location>
</feature>
<feature type="chain" id="PRO_0000285639" description="Protein THEM6">
    <location>
        <begin position="28"/>
        <end position="207"/>
    </location>
</feature>
<feature type="glycosylation site" description="N-linked (GlcNAc...) asparagine" evidence="1">
    <location>
        <position position="187"/>
    </location>
</feature>
<evidence type="ECO:0000255" key="1"/>
<evidence type="ECO:0000305" key="2"/>